<reference key="1">
    <citation type="journal article" date="2007" name="Nat. Biotechnol.">
        <title>Genome sequence and identification of candidate vaccine antigens from the animal pathogen Dichelobacter nodosus.</title>
        <authorList>
            <person name="Myers G.S.A."/>
            <person name="Parker D."/>
            <person name="Al-Hasani K."/>
            <person name="Kennan R.M."/>
            <person name="Seemann T."/>
            <person name="Ren Q."/>
            <person name="Badger J.H."/>
            <person name="Selengut J.D."/>
            <person name="Deboy R.T."/>
            <person name="Tettelin H."/>
            <person name="Boyce J.D."/>
            <person name="McCarl V.P."/>
            <person name="Han X."/>
            <person name="Nelson W.C."/>
            <person name="Madupu R."/>
            <person name="Mohamoud Y."/>
            <person name="Holley T."/>
            <person name="Fedorova N."/>
            <person name="Khouri H."/>
            <person name="Bottomley S.P."/>
            <person name="Whittington R.J."/>
            <person name="Adler B."/>
            <person name="Songer J.G."/>
            <person name="Rood J.I."/>
            <person name="Paulsen I.T."/>
        </authorList>
    </citation>
    <scope>NUCLEOTIDE SEQUENCE [LARGE SCALE GENOMIC DNA]</scope>
    <source>
        <strain>VCS1703A</strain>
    </source>
</reference>
<comment type="function">
    <text evidence="1">An aminoacyl-tRNA editing enzyme that deacylates mischarged D-aminoacyl-tRNAs. Also deacylates mischarged glycyl-tRNA(Ala), protecting cells against glycine mischarging by AlaRS. Acts via tRNA-based rather than protein-based catalysis; rejects L-amino acids rather than detecting D-amino acids in the active site. By recycling D-aminoacyl-tRNA to D-amino acids and free tRNA molecules, this enzyme counteracts the toxicity associated with the formation of D-aminoacyl-tRNA entities in vivo and helps enforce protein L-homochirality.</text>
</comment>
<comment type="catalytic activity">
    <reaction evidence="1">
        <text>glycyl-tRNA(Ala) + H2O = tRNA(Ala) + glycine + H(+)</text>
        <dbReference type="Rhea" id="RHEA:53744"/>
        <dbReference type="Rhea" id="RHEA-COMP:9657"/>
        <dbReference type="Rhea" id="RHEA-COMP:13640"/>
        <dbReference type="ChEBI" id="CHEBI:15377"/>
        <dbReference type="ChEBI" id="CHEBI:15378"/>
        <dbReference type="ChEBI" id="CHEBI:57305"/>
        <dbReference type="ChEBI" id="CHEBI:78442"/>
        <dbReference type="ChEBI" id="CHEBI:78522"/>
        <dbReference type="EC" id="3.1.1.96"/>
    </reaction>
</comment>
<comment type="catalytic activity">
    <reaction evidence="1">
        <text>a D-aminoacyl-tRNA + H2O = a tRNA + a D-alpha-amino acid + H(+)</text>
        <dbReference type="Rhea" id="RHEA:13953"/>
        <dbReference type="Rhea" id="RHEA-COMP:10123"/>
        <dbReference type="Rhea" id="RHEA-COMP:10124"/>
        <dbReference type="ChEBI" id="CHEBI:15377"/>
        <dbReference type="ChEBI" id="CHEBI:15378"/>
        <dbReference type="ChEBI" id="CHEBI:59871"/>
        <dbReference type="ChEBI" id="CHEBI:78442"/>
        <dbReference type="ChEBI" id="CHEBI:79333"/>
        <dbReference type="EC" id="3.1.1.96"/>
    </reaction>
</comment>
<comment type="subunit">
    <text evidence="1">Homodimer.</text>
</comment>
<comment type="subcellular location">
    <subcellularLocation>
        <location evidence="1">Cytoplasm</location>
    </subcellularLocation>
</comment>
<comment type="domain">
    <text evidence="1">A Gly-cisPro motif from one monomer fits into the active site of the other monomer to allow specific chiral rejection of L-amino acids.</text>
</comment>
<comment type="similarity">
    <text evidence="1">Belongs to the DTD family.</text>
</comment>
<feature type="chain" id="PRO_1000050830" description="D-aminoacyl-tRNA deacylase">
    <location>
        <begin position="1"/>
        <end position="145"/>
    </location>
</feature>
<feature type="short sequence motif" description="Gly-cisPro motif, important for rejection of L-amino acids" evidence="1">
    <location>
        <begin position="137"/>
        <end position="138"/>
    </location>
</feature>
<gene>
    <name evidence="1" type="primary">dtd</name>
    <name type="ordered locus">DNO_0491</name>
</gene>
<evidence type="ECO:0000255" key="1">
    <source>
        <dbReference type="HAMAP-Rule" id="MF_00518"/>
    </source>
</evidence>
<keyword id="KW-0963">Cytoplasm</keyword>
<keyword id="KW-0378">Hydrolase</keyword>
<keyword id="KW-1185">Reference proteome</keyword>
<keyword id="KW-0694">RNA-binding</keyword>
<keyword id="KW-0820">tRNA-binding</keyword>
<protein>
    <recommendedName>
        <fullName evidence="1">D-aminoacyl-tRNA deacylase</fullName>
        <shortName evidence="1">DTD</shortName>
        <ecNumber evidence="1">3.1.1.96</ecNumber>
    </recommendedName>
    <alternativeName>
        <fullName evidence="1">Gly-tRNA(Ala) deacylase</fullName>
    </alternativeName>
</protein>
<dbReference type="EC" id="3.1.1.96" evidence="1"/>
<dbReference type="EMBL" id="CP000513">
    <property type="protein sequence ID" value="ABQ13834.1"/>
    <property type="molecule type" value="Genomic_DNA"/>
</dbReference>
<dbReference type="RefSeq" id="WP_012030827.1">
    <property type="nucleotide sequence ID" value="NC_009446.1"/>
</dbReference>
<dbReference type="SMR" id="A5EVP7"/>
<dbReference type="STRING" id="246195.DNO_0491"/>
<dbReference type="KEGG" id="dno:DNO_0491"/>
<dbReference type="eggNOG" id="COG1490">
    <property type="taxonomic scope" value="Bacteria"/>
</dbReference>
<dbReference type="HOGENOM" id="CLU_076901_1_1_6"/>
<dbReference type="OrthoDB" id="9801395at2"/>
<dbReference type="Proteomes" id="UP000000248">
    <property type="component" value="Chromosome"/>
</dbReference>
<dbReference type="GO" id="GO:0005737">
    <property type="term" value="C:cytoplasm"/>
    <property type="evidence" value="ECO:0007669"/>
    <property type="project" value="UniProtKB-SubCell"/>
</dbReference>
<dbReference type="GO" id="GO:0051500">
    <property type="term" value="F:D-tyrosyl-tRNA(Tyr) deacylase activity"/>
    <property type="evidence" value="ECO:0007669"/>
    <property type="project" value="TreeGrafter"/>
</dbReference>
<dbReference type="GO" id="GO:0106026">
    <property type="term" value="F:Gly-tRNA(Ala) deacylase activity"/>
    <property type="evidence" value="ECO:0007669"/>
    <property type="project" value="UniProtKB-UniRule"/>
</dbReference>
<dbReference type="GO" id="GO:0043908">
    <property type="term" value="F:Ser(Gly)-tRNA(Ala) hydrolase activity"/>
    <property type="evidence" value="ECO:0007669"/>
    <property type="project" value="UniProtKB-UniRule"/>
</dbReference>
<dbReference type="GO" id="GO:0000049">
    <property type="term" value="F:tRNA binding"/>
    <property type="evidence" value="ECO:0007669"/>
    <property type="project" value="UniProtKB-UniRule"/>
</dbReference>
<dbReference type="GO" id="GO:0019478">
    <property type="term" value="P:D-amino acid catabolic process"/>
    <property type="evidence" value="ECO:0007669"/>
    <property type="project" value="UniProtKB-UniRule"/>
</dbReference>
<dbReference type="CDD" id="cd00563">
    <property type="entry name" value="Dtyr_deacylase"/>
    <property type="match status" value="1"/>
</dbReference>
<dbReference type="FunFam" id="3.50.80.10:FF:000001">
    <property type="entry name" value="D-aminoacyl-tRNA deacylase"/>
    <property type="match status" value="1"/>
</dbReference>
<dbReference type="Gene3D" id="3.50.80.10">
    <property type="entry name" value="D-tyrosyl-tRNA(Tyr) deacylase"/>
    <property type="match status" value="1"/>
</dbReference>
<dbReference type="HAMAP" id="MF_00518">
    <property type="entry name" value="Deacylase_Dtd"/>
    <property type="match status" value="1"/>
</dbReference>
<dbReference type="InterPro" id="IPR003732">
    <property type="entry name" value="Daa-tRNA_deacyls_DTD"/>
</dbReference>
<dbReference type="InterPro" id="IPR023509">
    <property type="entry name" value="DTD-like_sf"/>
</dbReference>
<dbReference type="NCBIfam" id="TIGR00256">
    <property type="entry name" value="D-aminoacyl-tRNA deacylase"/>
    <property type="match status" value="1"/>
</dbReference>
<dbReference type="PANTHER" id="PTHR10472:SF5">
    <property type="entry name" value="D-AMINOACYL-TRNA DEACYLASE 1"/>
    <property type="match status" value="1"/>
</dbReference>
<dbReference type="PANTHER" id="PTHR10472">
    <property type="entry name" value="D-TYROSYL-TRNA TYR DEACYLASE"/>
    <property type="match status" value="1"/>
</dbReference>
<dbReference type="Pfam" id="PF02580">
    <property type="entry name" value="Tyr_Deacylase"/>
    <property type="match status" value="1"/>
</dbReference>
<dbReference type="SUPFAM" id="SSF69500">
    <property type="entry name" value="DTD-like"/>
    <property type="match status" value="1"/>
</dbReference>
<accession>A5EVP7</accession>
<sequence>MIGLIQRVERASVCVEGKEIGAIDRGLLVFVGIERADSAQQAEKLAQKLLNYRVFEDELGKMNLNVQQIGGELLLVSQFTLAANTQKGNRPSFDPAMAPQEAEPLFDYFCQTVHTHYPHTATGRFGADMRVHLINDGPVTFWLHV</sequence>
<name>DTD_DICNV</name>
<organism>
    <name type="scientific">Dichelobacter nodosus (strain VCS1703A)</name>
    <dbReference type="NCBI Taxonomy" id="246195"/>
    <lineage>
        <taxon>Bacteria</taxon>
        <taxon>Pseudomonadati</taxon>
        <taxon>Pseudomonadota</taxon>
        <taxon>Gammaproteobacteria</taxon>
        <taxon>Cardiobacteriales</taxon>
        <taxon>Cardiobacteriaceae</taxon>
        <taxon>Dichelobacter</taxon>
    </lineage>
</organism>
<proteinExistence type="inferred from homology"/>